<keyword id="KW-0001">2Fe-2S</keyword>
<keyword id="KW-0072">Autophagy</keyword>
<keyword id="KW-0256">Endoplasmic reticulum</keyword>
<keyword id="KW-0408">Iron</keyword>
<keyword id="KW-0411">Iron-sulfur</keyword>
<keyword id="KW-0472">Membrane</keyword>
<keyword id="KW-0479">Metal-binding</keyword>
<keyword id="KW-0496">Mitochondrion</keyword>
<keyword id="KW-1000">Mitochondrion outer membrane</keyword>
<keyword id="KW-1185">Reference proteome</keyword>
<keyword id="KW-0812">Transmembrane</keyword>
<keyword id="KW-1133">Transmembrane helix</keyword>
<comment type="function">
    <text evidence="1">Regulator of autophagy that contributes to antagonize becn1-mediated cellular autophagy at the endoplasmic reticulum. Participates in the interaction of bcl2 with becn1 and is required for bcl2-mediated depression of endoplasmic reticulum Ca(2+) stores during autophagy (By similarity).</text>
</comment>
<comment type="cofactor">
    <cofactor evidence="1">
        <name>[2Fe-2S] cluster</name>
        <dbReference type="ChEBI" id="CHEBI:190135"/>
    </cofactor>
    <text evidence="1">Binds 1 [2Fe-2S] cluster.</text>
</comment>
<comment type="subunit">
    <text evidence="1">Homodimer.</text>
</comment>
<comment type="subcellular location">
    <subcellularLocation>
        <location evidence="1">Endoplasmic reticulum membrane</location>
        <topology evidence="1">Single-pass membrane protein</topology>
    </subcellularLocation>
    <subcellularLocation>
        <location evidence="1">Mitochondrion outer membrane</location>
        <topology evidence="1">Single-pass membrane protein</topology>
    </subcellularLocation>
</comment>
<comment type="similarity">
    <text evidence="3">Belongs to the CISD protein family. CISD2 subfamily.</text>
</comment>
<feature type="chain" id="PRO_0000316009" description="CDGSH iron-sulfur domain-containing protein 2">
    <location>
        <begin position="1"/>
        <end position="135"/>
    </location>
</feature>
<feature type="topological domain" description="Lumenal" evidence="2">
    <location>
        <begin position="1"/>
        <end position="37"/>
    </location>
</feature>
<feature type="transmembrane region" description="Helical" evidence="2">
    <location>
        <begin position="38"/>
        <end position="60"/>
    </location>
</feature>
<feature type="topological domain" description="Cytoplasmic" evidence="2">
    <location>
        <begin position="61"/>
        <end position="135"/>
    </location>
</feature>
<feature type="binding site" evidence="1">
    <location>
        <position position="99"/>
    </location>
    <ligand>
        <name>[2Fe-2S] cluster</name>
        <dbReference type="ChEBI" id="CHEBI:190135"/>
    </ligand>
</feature>
<feature type="binding site" evidence="1">
    <location>
        <position position="101"/>
    </location>
    <ligand>
        <name>[2Fe-2S] cluster</name>
        <dbReference type="ChEBI" id="CHEBI:190135"/>
    </ligand>
</feature>
<feature type="binding site" evidence="1">
    <location>
        <position position="110"/>
    </location>
    <ligand>
        <name>[2Fe-2S] cluster</name>
        <dbReference type="ChEBI" id="CHEBI:190135"/>
    </ligand>
</feature>
<feature type="binding site" evidence="1">
    <location>
        <position position="114"/>
    </location>
    <ligand>
        <name>[2Fe-2S] cluster</name>
        <dbReference type="ChEBI" id="CHEBI:190135"/>
    </ligand>
</feature>
<reference key="1">
    <citation type="submission" date="2004-12" db="EMBL/GenBank/DDBJ databases">
        <authorList>
            <consortium name="NIH - Xenopus Gene Collection (XGC) project"/>
        </authorList>
    </citation>
    <scope>NUCLEOTIDE SEQUENCE [LARGE SCALE MRNA]</scope>
</reference>
<organism>
    <name type="scientific">Xenopus tropicalis</name>
    <name type="common">Western clawed frog</name>
    <name type="synonym">Silurana tropicalis</name>
    <dbReference type="NCBI Taxonomy" id="8364"/>
    <lineage>
        <taxon>Eukaryota</taxon>
        <taxon>Metazoa</taxon>
        <taxon>Chordata</taxon>
        <taxon>Craniata</taxon>
        <taxon>Vertebrata</taxon>
        <taxon>Euteleostomi</taxon>
        <taxon>Amphibia</taxon>
        <taxon>Batrachia</taxon>
        <taxon>Anura</taxon>
        <taxon>Pipoidea</taxon>
        <taxon>Pipidae</taxon>
        <taxon>Xenopodinae</taxon>
        <taxon>Xenopus</taxon>
        <taxon>Silurana</taxon>
    </lineage>
</organism>
<proteinExistence type="evidence at transcript level"/>
<dbReference type="EMBL" id="BC088777">
    <property type="protein sequence ID" value="AAH88777.1"/>
    <property type="molecule type" value="mRNA"/>
</dbReference>
<dbReference type="RefSeq" id="NP_001011479.1">
    <property type="nucleotide sequence ID" value="NM_001011479.1"/>
</dbReference>
<dbReference type="SMR" id="Q5I027"/>
<dbReference type="FunCoup" id="Q5I027">
    <property type="interactions" value="2203"/>
</dbReference>
<dbReference type="STRING" id="8364.ENSXETP00000002336"/>
<dbReference type="PaxDb" id="8364-ENSXETP00000046116"/>
<dbReference type="DNASU" id="496970"/>
<dbReference type="GeneID" id="496970"/>
<dbReference type="KEGG" id="xtr:496970"/>
<dbReference type="AGR" id="Xenbase:XB-GENE-5969737"/>
<dbReference type="CTD" id="493856"/>
<dbReference type="Xenbase" id="XB-GENE-5969737">
    <property type="gene designation" value="cisd2"/>
</dbReference>
<dbReference type="eggNOG" id="KOG3461">
    <property type="taxonomic scope" value="Eukaryota"/>
</dbReference>
<dbReference type="InParanoid" id="Q5I027"/>
<dbReference type="OMA" id="NCANVCY"/>
<dbReference type="OrthoDB" id="449252at2759"/>
<dbReference type="Proteomes" id="UP000008143">
    <property type="component" value="Chromosome 1"/>
</dbReference>
<dbReference type="GO" id="GO:0005789">
    <property type="term" value="C:endoplasmic reticulum membrane"/>
    <property type="evidence" value="ECO:0000250"/>
    <property type="project" value="UniProtKB"/>
</dbReference>
<dbReference type="GO" id="GO:0005741">
    <property type="term" value="C:mitochondrial outer membrane"/>
    <property type="evidence" value="ECO:0000250"/>
    <property type="project" value="UniProtKB"/>
</dbReference>
<dbReference type="GO" id="GO:0051537">
    <property type="term" value="F:2 iron, 2 sulfur cluster binding"/>
    <property type="evidence" value="ECO:0000250"/>
    <property type="project" value="UniProtKB"/>
</dbReference>
<dbReference type="GO" id="GO:0046872">
    <property type="term" value="F:metal ion binding"/>
    <property type="evidence" value="ECO:0007669"/>
    <property type="project" value="UniProtKB-KW"/>
</dbReference>
<dbReference type="GO" id="GO:0042803">
    <property type="term" value="F:protein homodimerization activity"/>
    <property type="evidence" value="ECO:0000250"/>
    <property type="project" value="UniProtKB"/>
</dbReference>
<dbReference type="GO" id="GO:0000422">
    <property type="term" value="P:autophagy of mitochondrion"/>
    <property type="evidence" value="ECO:0000250"/>
    <property type="project" value="UniProtKB"/>
</dbReference>
<dbReference type="GO" id="GO:0010506">
    <property type="term" value="P:regulation of autophagy"/>
    <property type="evidence" value="ECO:0000250"/>
    <property type="project" value="UniProtKB"/>
</dbReference>
<dbReference type="FunFam" id="3.40.5.90:FF:000001">
    <property type="entry name" value="CDGSH iron-sulfur domain-containing protein 1"/>
    <property type="match status" value="1"/>
</dbReference>
<dbReference type="Gene3D" id="3.40.5.90">
    <property type="entry name" value="CDGSH iron-sulfur domain, mitoNEET-type"/>
    <property type="match status" value="1"/>
</dbReference>
<dbReference type="InterPro" id="IPR045131">
    <property type="entry name" value="CISD1/2"/>
</dbReference>
<dbReference type="InterPro" id="IPR018967">
    <property type="entry name" value="FeS-contain_CDGSH-typ"/>
</dbReference>
<dbReference type="InterPro" id="IPR019610">
    <property type="entry name" value="FeS-contain_mitoNEET_N"/>
</dbReference>
<dbReference type="InterPro" id="IPR042216">
    <property type="entry name" value="MitoNEET_CISD"/>
</dbReference>
<dbReference type="PANTHER" id="PTHR13680">
    <property type="entry name" value="CDGSH IRON-SULFUR DOMAIN-CONTAINING PROTEIN 1"/>
    <property type="match status" value="1"/>
</dbReference>
<dbReference type="PANTHER" id="PTHR13680:SF33">
    <property type="entry name" value="CDGSH IRON-SULFUR DOMAIN-CONTAINING PROTEIN 2"/>
    <property type="match status" value="1"/>
</dbReference>
<dbReference type="Pfam" id="PF10660">
    <property type="entry name" value="MitoNEET_N"/>
    <property type="match status" value="1"/>
</dbReference>
<dbReference type="Pfam" id="PF09360">
    <property type="entry name" value="zf-CDGSH"/>
    <property type="match status" value="1"/>
</dbReference>
<dbReference type="SMART" id="SM00704">
    <property type="entry name" value="ZnF_CDGSH"/>
    <property type="match status" value="1"/>
</dbReference>
<name>CISD2_XENTR</name>
<evidence type="ECO:0000250" key="1"/>
<evidence type="ECO:0000255" key="2"/>
<evidence type="ECO:0000305" key="3"/>
<sequence length="135" mass="15350">MVLESIARVIKVQLPAYLKRLPIPDSIAGFIRLTVSEWLRLLPFLGVLALLGYLAIRPFLPKKKQQKDSLINLKIQKENPKVVNEINIEDLHLAKAAYCRCWRSKTFPVCDGSHNKHNELTGDNVGPLILKKKEV</sequence>
<protein>
    <recommendedName>
        <fullName>CDGSH iron-sulfur domain-containing protein 2</fullName>
    </recommendedName>
</protein>
<accession>Q5I027</accession>
<gene>
    <name type="primary">cisd2</name>
</gene>